<feature type="signal peptide" evidence="3">
    <location>
        <begin position="1"/>
        <end position="19"/>
    </location>
</feature>
<feature type="chain" id="PRO_0000008555" description="Esterase-5B">
    <location>
        <begin position="20"/>
        <end position="545"/>
    </location>
</feature>
<feature type="active site" description="Acyl-ester intermediate" evidence="4">
    <location>
        <position position="207"/>
    </location>
</feature>
<feature type="active site" description="Charge relay system" evidence="1">
    <location>
        <position position="467"/>
    </location>
</feature>
<feature type="glycosylation site" description="N-linked (GlcNAc...) asparagine" evidence="3">
    <location>
        <position position="113"/>
    </location>
</feature>
<feature type="glycosylation site" description="N-linked (GlcNAc...) asparagine" evidence="3">
    <location>
        <position position="421"/>
    </location>
</feature>
<feature type="glycosylation site" description="N-linked (GlcNAc...) asparagine" evidence="3">
    <location>
        <position position="507"/>
    </location>
</feature>
<feature type="disulfide bond" evidence="1">
    <location>
        <begin position="84"/>
        <end position="103"/>
    </location>
</feature>
<feature type="disulfide bond" evidence="1">
    <location>
        <begin position="259"/>
        <end position="271"/>
    </location>
</feature>
<feature type="disulfide bond" evidence="3">
    <location>
        <begin position="515"/>
        <end position="536"/>
    </location>
</feature>
<organism>
    <name type="scientific">Drosophila miranda</name>
    <name type="common">Fruit fly</name>
    <dbReference type="NCBI Taxonomy" id="7229"/>
    <lineage>
        <taxon>Eukaryota</taxon>
        <taxon>Metazoa</taxon>
        <taxon>Ecdysozoa</taxon>
        <taxon>Arthropoda</taxon>
        <taxon>Hexapoda</taxon>
        <taxon>Insecta</taxon>
        <taxon>Pterygota</taxon>
        <taxon>Neoptera</taxon>
        <taxon>Endopterygota</taxon>
        <taxon>Diptera</taxon>
        <taxon>Brachycera</taxon>
        <taxon>Muscomorpha</taxon>
        <taxon>Ephydroidea</taxon>
        <taxon>Drosophilidae</taxon>
        <taxon>Drosophila</taxon>
        <taxon>Sophophora</taxon>
    </lineage>
</organism>
<evidence type="ECO:0000250" key="1"/>
<evidence type="ECO:0000250" key="2">
    <source>
        <dbReference type="UniProtKB" id="P25726"/>
    </source>
</evidence>
<evidence type="ECO:0000255" key="3"/>
<evidence type="ECO:0000255" key="4">
    <source>
        <dbReference type="PROSITE-ProRule" id="PRU10039"/>
    </source>
</evidence>
<evidence type="ECO:0000305" key="5"/>
<sequence>MYCEKLILLLGCFWISSSASDPADPLLVDLPNGKLRGRDNGNYYSYESLPYAEPPVGDLRFEAPQPYKQQWTDTFDATQPPVLCMQWDQFIQGDDKLAGNEDCLTVSVYRPKNSSRNSFPVVAQIHGVAFMFGGASQNGHENFMREGNLILVKISYRLGPLGFVSTGDADLSGNFGLKDQRLALLWIKQNIASFGGEPENILVIGHSAGGGSVHLQVLREDFSKVAKAAISFSGNALDPWVVQQGGRGRAFELGRIVGCGQASDSVTLKKCLKSKPASEIVSAVRNFLVFAYVPFTPFGPVVESPEAPEAFISQHPIDIIKSGKFAQVPWAVTYTTEDGGYNAALLLEKQASSGRELIVDLNDRWFDWAPYLLFYRDSMTTIKDMDDYSRKLRQEYLGDRRFSVESYWDLQRLFTDVLFKNSTEISLDLHRKHGKSPVYAFVYDNPANTGIGQGLAKRTDINFGTVHGDDYFLIFENIVREPQLRSDEEIISRNFLKMLNDFVLSENGTLAFGTCDFQDNVGSSKLQLLSITRNGCENLELESFP</sequence>
<gene>
    <name type="primary">Est-5B</name>
    <name type="synonym">Est5B</name>
</gene>
<keyword id="KW-1015">Disulfide bond</keyword>
<keyword id="KW-0325">Glycoprotein</keyword>
<keyword id="KW-0378">Hydrolase</keyword>
<keyword id="KW-0964">Secreted</keyword>
<keyword id="KW-0719">Serine esterase</keyword>
<keyword id="KW-0732">Signal</keyword>
<accession>O16170</accession>
<accession>Q56RI7</accession>
<comment type="catalytic activity">
    <reaction evidence="4">
        <text>a carboxylic ester + H2O = an alcohol + a carboxylate + H(+)</text>
        <dbReference type="Rhea" id="RHEA:21164"/>
        <dbReference type="ChEBI" id="CHEBI:15377"/>
        <dbReference type="ChEBI" id="CHEBI:15378"/>
        <dbReference type="ChEBI" id="CHEBI:29067"/>
        <dbReference type="ChEBI" id="CHEBI:30879"/>
        <dbReference type="ChEBI" id="CHEBI:33308"/>
        <dbReference type="EC" id="3.1.1.1"/>
    </reaction>
</comment>
<comment type="subunit">
    <text evidence="2">Homodimer.</text>
</comment>
<comment type="subcellular location">
    <subcellularLocation>
        <location>Secreted</location>
    </subcellularLocation>
</comment>
<comment type="similarity">
    <text evidence="5">Belongs to the type-B carboxylesterase/lipase family.</text>
</comment>
<proteinExistence type="inferred from homology"/>
<reference key="1">
    <citation type="journal article" date="1998" name="Genetics">
        <title>The role of gene conversion in determining sequence variation and divergence in the Est-5 gene family in Drosophila pseudoobscura.</title>
        <authorList>
            <person name="King L.M."/>
        </authorList>
    </citation>
    <scope>NUCLEOTIDE SEQUENCE [GENOMIC DNA]</scope>
</reference>
<reference key="2">
    <citation type="journal article" date="2005" name="Genetics">
        <title>Patterns of selection on synonymous and nonsynonymous variants in Drosophila miranda.</title>
        <authorList>
            <person name="Bartolome C."/>
            <person name="Maside X."/>
            <person name="Yi S."/>
            <person name="Grant A.L."/>
            <person name="Charlesworth B."/>
        </authorList>
    </citation>
    <scope>NUCLEOTIDE SEQUENCE [GENOMIC DNA]</scope>
    <source>
        <strain>MSH22</strain>
    </source>
</reference>
<protein>
    <recommendedName>
        <fullName>Esterase-5B</fullName>
        <shortName>Est-5B</shortName>
        <ecNumber>3.1.1.1</ecNumber>
    </recommendedName>
    <alternativeName>
        <fullName>Carboxylic-ester hydrolase 5B</fullName>
        <shortName>Carboxylesterase-5B</shortName>
    </alternativeName>
</protein>
<dbReference type="EC" id="3.1.1.1"/>
<dbReference type="EMBL" id="AF016109">
    <property type="protein sequence ID" value="AAB70221.1"/>
    <property type="molecule type" value="Genomic_DNA"/>
</dbReference>
<dbReference type="EMBL" id="AY754520">
    <property type="protein sequence ID" value="AAX13095.1"/>
    <property type="molecule type" value="Genomic_DNA"/>
</dbReference>
<dbReference type="SMR" id="O16170"/>
<dbReference type="ESTHER" id="dromi-est5b">
    <property type="family name" value="Carb_B_Arthropoda"/>
</dbReference>
<dbReference type="MEROPS" id="S09.947"/>
<dbReference type="GlyCosmos" id="O16170">
    <property type="glycosylation" value="3 sites, No reported glycans"/>
</dbReference>
<dbReference type="GO" id="GO:0005576">
    <property type="term" value="C:extracellular region"/>
    <property type="evidence" value="ECO:0007669"/>
    <property type="project" value="UniProtKB-SubCell"/>
</dbReference>
<dbReference type="GO" id="GO:0106435">
    <property type="term" value="F:carboxylesterase activity"/>
    <property type="evidence" value="ECO:0007669"/>
    <property type="project" value="UniProtKB-EC"/>
</dbReference>
<dbReference type="CDD" id="cd00312">
    <property type="entry name" value="Esterase_lipase"/>
    <property type="match status" value="1"/>
</dbReference>
<dbReference type="FunFam" id="3.40.50.1820:FF:000378">
    <property type="entry name" value="Carboxylic ester hydrolase"/>
    <property type="match status" value="1"/>
</dbReference>
<dbReference type="Gene3D" id="3.40.50.1820">
    <property type="entry name" value="alpha/beta hydrolase"/>
    <property type="match status" value="1"/>
</dbReference>
<dbReference type="InterPro" id="IPR029058">
    <property type="entry name" value="AB_hydrolase_fold"/>
</dbReference>
<dbReference type="InterPro" id="IPR002018">
    <property type="entry name" value="CarbesteraseB"/>
</dbReference>
<dbReference type="InterPro" id="IPR019826">
    <property type="entry name" value="Carboxylesterase_B_AS"/>
</dbReference>
<dbReference type="InterPro" id="IPR019819">
    <property type="entry name" value="Carboxylesterase_B_CS"/>
</dbReference>
<dbReference type="PANTHER" id="PTHR43142">
    <property type="entry name" value="CARBOXYLIC ESTER HYDROLASE"/>
    <property type="match status" value="1"/>
</dbReference>
<dbReference type="PANTHER" id="PTHR43142:SF1">
    <property type="entry name" value="CARBOXYLIC ESTER HYDROLASE"/>
    <property type="match status" value="1"/>
</dbReference>
<dbReference type="Pfam" id="PF00135">
    <property type="entry name" value="COesterase"/>
    <property type="match status" value="1"/>
</dbReference>
<dbReference type="SUPFAM" id="SSF53474">
    <property type="entry name" value="alpha/beta-Hydrolases"/>
    <property type="match status" value="1"/>
</dbReference>
<dbReference type="PROSITE" id="PS00122">
    <property type="entry name" value="CARBOXYLESTERASE_B_1"/>
    <property type="match status" value="1"/>
</dbReference>
<dbReference type="PROSITE" id="PS00941">
    <property type="entry name" value="CARBOXYLESTERASE_B_2"/>
    <property type="match status" value="1"/>
</dbReference>
<name>EST5B_DROMI</name>